<keyword id="KW-0131">Cell cycle</keyword>
<keyword id="KW-0132">Cell division</keyword>
<keyword id="KW-0997">Cell inner membrane</keyword>
<keyword id="KW-1003">Cell membrane</keyword>
<keyword id="KW-0472">Membrane</keyword>
<keyword id="KW-1185">Reference proteome</keyword>
<keyword id="KW-0812">Transmembrane</keyword>
<keyword id="KW-1133">Transmembrane helix</keyword>
<feature type="chain" id="PRO_0000160585" description="Cell division protein FtsQ">
    <location>
        <begin position="1"/>
        <end position="267"/>
    </location>
</feature>
<feature type="topological domain" description="Cytoplasmic" evidence="1">
    <location>
        <begin position="1"/>
        <end position="32"/>
    </location>
</feature>
<feature type="transmembrane region" description="Helical" evidence="1">
    <location>
        <begin position="33"/>
        <end position="53"/>
    </location>
</feature>
<feature type="topological domain" description="Periplasmic" evidence="1">
    <location>
        <begin position="54"/>
        <end position="267"/>
    </location>
</feature>
<feature type="domain" description="POTRA" evidence="2">
    <location>
        <begin position="73"/>
        <end position="141"/>
    </location>
</feature>
<protein>
    <recommendedName>
        <fullName evidence="1">Cell division protein FtsQ</fullName>
    </recommendedName>
</protein>
<name>FTSQ_RICPR</name>
<accession>Q9ZDS5</accession>
<reference key="1">
    <citation type="journal article" date="1998" name="Nature">
        <title>The genome sequence of Rickettsia prowazekii and the origin of mitochondria.</title>
        <authorList>
            <person name="Andersson S.G.E."/>
            <person name="Zomorodipour A."/>
            <person name="Andersson J.O."/>
            <person name="Sicheritz-Ponten T."/>
            <person name="Alsmark U.C.M."/>
            <person name="Podowski R.M."/>
            <person name="Naeslund A.K."/>
            <person name="Eriksson A.-S."/>
            <person name="Winkler H.H."/>
            <person name="Kurland C.G."/>
        </authorList>
    </citation>
    <scope>NUCLEOTIDE SEQUENCE [LARGE SCALE GENOMIC DNA]</scope>
    <source>
        <strain>Madrid E</strain>
    </source>
</reference>
<comment type="function">
    <text evidence="1">Essential cell division protein.</text>
</comment>
<comment type="subcellular location">
    <subcellularLocation>
        <location evidence="1">Cell inner membrane</location>
        <topology evidence="1">Single-pass type II membrane protein</topology>
    </subcellularLocation>
    <text evidence="1">Localizes to the division septum.</text>
</comment>
<comment type="similarity">
    <text evidence="1">Belongs to the FtsQ/DivIB family. FtsQ subfamily.</text>
</comment>
<sequence>MRQKTISNKNKQTKNTNNISLRRKLGLMYKKAILVLKIVLMIFVCLFVFTKYFTSIKTYLITNIYQVTTKLGFRLENVIIEGQQNVDELTILKVLNANKSSPIFSLKLDEISNNLKKSKWIKEVYVSRRLPNTVYIKLFEREPIAIWQINNQLFLIDEEGYKISKDIQPFSHLLHVVGEGANIYASKLVLELQKYPALLNKTLVAIRVGDRRWDLNLKGNISIKLPEKEFETALKYIDALNKTNKLFNQNYKALDLRDRNKYYIQKY</sequence>
<dbReference type="EMBL" id="AJ235271">
    <property type="protein sequence ID" value="CAA14712.1"/>
    <property type="molecule type" value="Genomic_DNA"/>
</dbReference>
<dbReference type="PIR" id="F71679">
    <property type="entry name" value="F71679"/>
</dbReference>
<dbReference type="RefSeq" id="NP_220635.1">
    <property type="nucleotide sequence ID" value="NC_000963.1"/>
</dbReference>
<dbReference type="RefSeq" id="WP_004596070.1">
    <property type="nucleotide sequence ID" value="NC_000963.1"/>
</dbReference>
<dbReference type="SMR" id="Q9ZDS5"/>
<dbReference type="STRING" id="272947.gene:17555331"/>
<dbReference type="EnsemblBacteria" id="CAA14712">
    <property type="protein sequence ID" value="CAA14712"/>
    <property type="gene ID" value="CAA14712"/>
</dbReference>
<dbReference type="KEGG" id="rpr:RP250"/>
<dbReference type="PATRIC" id="fig|272947.5.peg.257"/>
<dbReference type="eggNOG" id="COG1589">
    <property type="taxonomic scope" value="Bacteria"/>
</dbReference>
<dbReference type="HOGENOM" id="CLU_061141_2_1_5"/>
<dbReference type="OrthoDB" id="9783091at2"/>
<dbReference type="Proteomes" id="UP000002480">
    <property type="component" value="Chromosome"/>
</dbReference>
<dbReference type="GO" id="GO:0032153">
    <property type="term" value="C:cell division site"/>
    <property type="evidence" value="ECO:0007669"/>
    <property type="project" value="UniProtKB-UniRule"/>
</dbReference>
<dbReference type="GO" id="GO:0005886">
    <property type="term" value="C:plasma membrane"/>
    <property type="evidence" value="ECO:0007669"/>
    <property type="project" value="UniProtKB-SubCell"/>
</dbReference>
<dbReference type="GO" id="GO:0090529">
    <property type="term" value="P:cell septum assembly"/>
    <property type="evidence" value="ECO:0007669"/>
    <property type="project" value="InterPro"/>
</dbReference>
<dbReference type="GO" id="GO:0043093">
    <property type="term" value="P:FtsZ-dependent cytokinesis"/>
    <property type="evidence" value="ECO:0007669"/>
    <property type="project" value="UniProtKB-UniRule"/>
</dbReference>
<dbReference type="Gene3D" id="3.10.20.310">
    <property type="entry name" value="membrane protein fhac"/>
    <property type="match status" value="1"/>
</dbReference>
<dbReference type="HAMAP" id="MF_00911">
    <property type="entry name" value="FtsQ_subfam"/>
    <property type="match status" value="1"/>
</dbReference>
<dbReference type="InterPro" id="IPR005548">
    <property type="entry name" value="Cell_div_FtsQ/DivIB_C"/>
</dbReference>
<dbReference type="InterPro" id="IPR026579">
    <property type="entry name" value="FtsQ"/>
</dbReference>
<dbReference type="InterPro" id="IPR034746">
    <property type="entry name" value="POTRA"/>
</dbReference>
<dbReference type="InterPro" id="IPR013685">
    <property type="entry name" value="POTRA_FtsQ_type"/>
</dbReference>
<dbReference type="PANTHER" id="PTHR35851">
    <property type="entry name" value="CELL DIVISION PROTEIN FTSQ"/>
    <property type="match status" value="1"/>
</dbReference>
<dbReference type="PANTHER" id="PTHR35851:SF1">
    <property type="entry name" value="CELL DIVISION PROTEIN FTSQ"/>
    <property type="match status" value="1"/>
</dbReference>
<dbReference type="Pfam" id="PF03799">
    <property type="entry name" value="FtsQ_DivIB_C"/>
    <property type="match status" value="1"/>
</dbReference>
<dbReference type="Pfam" id="PF08478">
    <property type="entry name" value="POTRA_1"/>
    <property type="match status" value="1"/>
</dbReference>
<dbReference type="PROSITE" id="PS51779">
    <property type="entry name" value="POTRA"/>
    <property type="match status" value="1"/>
</dbReference>
<proteinExistence type="inferred from homology"/>
<organism>
    <name type="scientific">Rickettsia prowazekii (strain Madrid E)</name>
    <dbReference type="NCBI Taxonomy" id="272947"/>
    <lineage>
        <taxon>Bacteria</taxon>
        <taxon>Pseudomonadati</taxon>
        <taxon>Pseudomonadota</taxon>
        <taxon>Alphaproteobacteria</taxon>
        <taxon>Rickettsiales</taxon>
        <taxon>Rickettsiaceae</taxon>
        <taxon>Rickettsieae</taxon>
        <taxon>Rickettsia</taxon>
        <taxon>typhus group</taxon>
    </lineage>
</organism>
<gene>
    <name evidence="1" type="primary">ftsQ</name>
    <name type="ordered locus">RP250</name>
</gene>
<evidence type="ECO:0000255" key="1">
    <source>
        <dbReference type="HAMAP-Rule" id="MF_00911"/>
    </source>
</evidence>
<evidence type="ECO:0000255" key="2">
    <source>
        <dbReference type="PROSITE-ProRule" id="PRU01115"/>
    </source>
</evidence>